<accession>C3KUT7</accession>
<feature type="chain" id="PRO_1000216268" description="Tyrosine--tRNA ligase">
    <location>
        <begin position="1"/>
        <end position="407"/>
    </location>
</feature>
<feature type="domain" description="S4 RNA-binding" evidence="1">
    <location>
        <begin position="341"/>
        <end position="405"/>
    </location>
</feature>
<feature type="short sequence motif" description="'HIGH' region">
    <location>
        <begin position="40"/>
        <end position="49"/>
    </location>
</feature>
<feature type="short sequence motif" description="'KMSKS' region">
    <location>
        <begin position="228"/>
        <end position="232"/>
    </location>
</feature>
<feature type="binding site" evidence="1">
    <location>
        <position position="35"/>
    </location>
    <ligand>
        <name>L-tyrosine</name>
        <dbReference type="ChEBI" id="CHEBI:58315"/>
    </ligand>
</feature>
<feature type="binding site" evidence="1">
    <location>
        <position position="168"/>
    </location>
    <ligand>
        <name>L-tyrosine</name>
        <dbReference type="ChEBI" id="CHEBI:58315"/>
    </ligand>
</feature>
<feature type="binding site" evidence="1">
    <location>
        <position position="172"/>
    </location>
    <ligand>
        <name>L-tyrosine</name>
        <dbReference type="ChEBI" id="CHEBI:58315"/>
    </ligand>
</feature>
<feature type="binding site" evidence="1">
    <location>
        <position position="231"/>
    </location>
    <ligand>
        <name>ATP</name>
        <dbReference type="ChEBI" id="CHEBI:30616"/>
    </ligand>
</feature>
<name>SYY_CLOB6</name>
<dbReference type="EC" id="6.1.1.1" evidence="1"/>
<dbReference type="EMBL" id="CP001083">
    <property type="protein sequence ID" value="ACQ54560.1"/>
    <property type="molecule type" value="Genomic_DNA"/>
</dbReference>
<dbReference type="RefSeq" id="WP_003360360.1">
    <property type="nucleotide sequence ID" value="NC_012658.1"/>
</dbReference>
<dbReference type="SMR" id="C3KUT7"/>
<dbReference type="KEGG" id="cbi:CLJ_B3605"/>
<dbReference type="HOGENOM" id="CLU_024003_0_3_9"/>
<dbReference type="Proteomes" id="UP000002333">
    <property type="component" value="Chromosome"/>
</dbReference>
<dbReference type="GO" id="GO:0005829">
    <property type="term" value="C:cytosol"/>
    <property type="evidence" value="ECO:0007669"/>
    <property type="project" value="TreeGrafter"/>
</dbReference>
<dbReference type="GO" id="GO:0005524">
    <property type="term" value="F:ATP binding"/>
    <property type="evidence" value="ECO:0007669"/>
    <property type="project" value="UniProtKB-UniRule"/>
</dbReference>
<dbReference type="GO" id="GO:0003723">
    <property type="term" value="F:RNA binding"/>
    <property type="evidence" value="ECO:0007669"/>
    <property type="project" value="UniProtKB-KW"/>
</dbReference>
<dbReference type="GO" id="GO:0004831">
    <property type="term" value="F:tyrosine-tRNA ligase activity"/>
    <property type="evidence" value="ECO:0007669"/>
    <property type="project" value="UniProtKB-UniRule"/>
</dbReference>
<dbReference type="GO" id="GO:0006437">
    <property type="term" value="P:tyrosyl-tRNA aminoacylation"/>
    <property type="evidence" value="ECO:0007669"/>
    <property type="project" value="UniProtKB-UniRule"/>
</dbReference>
<dbReference type="CDD" id="cd00165">
    <property type="entry name" value="S4"/>
    <property type="match status" value="1"/>
</dbReference>
<dbReference type="CDD" id="cd00805">
    <property type="entry name" value="TyrRS_core"/>
    <property type="match status" value="1"/>
</dbReference>
<dbReference type="FunFam" id="1.10.240.10:FF:000001">
    <property type="entry name" value="Tyrosine--tRNA ligase"/>
    <property type="match status" value="1"/>
</dbReference>
<dbReference type="FunFam" id="3.10.290.10:FF:000022">
    <property type="entry name" value="Tyrosine--tRNA ligase"/>
    <property type="match status" value="1"/>
</dbReference>
<dbReference type="FunFam" id="3.40.50.620:FF:000008">
    <property type="entry name" value="Tyrosine--tRNA ligase"/>
    <property type="match status" value="1"/>
</dbReference>
<dbReference type="Gene3D" id="3.40.50.620">
    <property type="entry name" value="HUPs"/>
    <property type="match status" value="1"/>
</dbReference>
<dbReference type="Gene3D" id="3.10.290.10">
    <property type="entry name" value="RNA-binding S4 domain"/>
    <property type="match status" value="1"/>
</dbReference>
<dbReference type="Gene3D" id="1.10.240.10">
    <property type="entry name" value="Tyrosyl-Transfer RNA Synthetase"/>
    <property type="match status" value="1"/>
</dbReference>
<dbReference type="HAMAP" id="MF_02006">
    <property type="entry name" value="Tyr_tRNA_synth_type1"/>
    <property type="match status" value="1"/>
</dbReference>
<dbReference type="InterPro" id="IPR001412">
    <property type="entry name" value="aa-tRNA-synth_I_CS"/>
</dbReference>
<dbReference type="InterPro" id="IPR002305">
    <property type="entry name" value="aa-tRNA-synth_Ic"/>
</dbReference>
<dbReference type="InterPro" id="IPR014729">
    <property type="entry name" value="Rossmann-like_a/b/a_fold"/>
</dbReference>
<dbReference type="InterPro" id="IPR036986">
    <property type="entry name" value="S4_RNA-bd_sf"/>
</dbReference>
<dbReference type="InterPro" id="IPR054608">
    <property type="entry name" value="SYY-like_C"/>
</dbReference>
<dbReference type="InterPro" id="IPR002307">
    <property type="entry name" value="Tyr-tRNA-ligase"/>
</dbReference>
<dbReference type="InterPro" id="IPR024088">
    <property type="entry name" value="Tyr-tRNA-ligase_bac-type"/>
</dbReference>
<dbReference type="InterPro" id="IPR024107">
    <property type="entry name" value="Tyr-tRNA-ligase_bac_1"/>
</dbReference>
<dbReference type="NCBIfam" id="TIGR00234">
    <property type="entry name" value="tyrS"/>
    <property type="match status" value="1"/>
</dbReference>
<dbReference type="PANTHER" id="PTHR11766:SF0">
    <property type="entry name" value="TYROSINE--TRNA LIGASE, MITOCHONDRIAL"/>
    <property type="match status" value="1"/>
</dbReference>
<dbReference type="PANTHER" id="PTHR11766">
    <property type="entry name" value="TYROSYL-TRNA SYNTHETASE"/>
    <property type="match status" value="1"/>
</dbReference>
<dbReference type="Pfam" id="PF22421">
    <property type="entry name" value="SYY_C-terminal"/>
    <property type="match status" value="1"/>
</dbReference>
<dbReference type="Pfam" id="PF00579">
    <property type="entry name" value="tRNA-synt_1b"/>
    <property type="match status" value="1"/>
</dbReference>
<dbReference type="PRINTS" id="PR01040">
    <property type="entry name" value="TRNASYNTHTYR"/>
</dbReference>
<dbReference type="SUPFAM" id="SSF55174">
    <property type="entry name" value="Alpha-L RNA-binding motif"/>
    <property type="match status" value="1"/>
</dbReference>
<dbReference type="SUPFAM" id="SSF52374">
    <property type="entry name" value="Nucleotidylyl transferase"/>
    <property type="match status" value="1"/>
</dbReference>
<dbReference type="PROSITE" id="PS00178">
    <property type="entry name" value="AA_TRNA_LIGASE_I"/>
    <property type="match status" value="1"/>
</dbReference>
<dbReference type="PROSITE" id="PS50889">
    <property type="entry name" value="S4"/>
    <property type="match status" value="1"/>
</dbReference>
<evidence type="ECO:0000255" key="1">
    <source>
        <dbReference type="HAMAP-Rule" id="MF_02006"/>
    </source>
</evidence>
<protein>
    <recommendedName>
        <fullName evidence="1">Tyrosine--tRNA ligase</fullName>
        <ecNumber evidence="1">6.1.1.1</ecNumber>
    </recommendedName>
    <alternativeName>
        <fullName evidence="1">Tyrosyl-tRNA synthetase</fullName>
        <shortName evidence="1">TyrRS</shortName>
    </alternativeName>
</protein>
<proteinExistence type="inferred from homology"/>
<reference key="1">
    <citation type="submission" date="2008-05" db="EMBL/GenBank/DDBJ databases">
        <title>Genome sequence of Clostridium botulinum Ba4 strain 657.</title>
        <authorList>
            <person name="Shrivastava S."/>
            <person name="Brown J.L."/>
            <person name="Bruce D."/>
            <person name="Detter C."/>
            <person name="Munk C."/>
            <person name="Smith L.A."/>
            <person name="Smith T.J."/>
            <person name="Sutton G."/>
            <person name="Brettin T.S."/>
        </authorList>
    </citation>
    <scope>NUCLEOTIDE SEQUENCE [LARGE SCALE GENOMIC DNA]</scope>
    <source>
        <strain>657 / Type Ba4</strain>
    </source>
</reference>
<gene>
    <name evidence="1" type="primary">tyrS</name>
    <name type="ordered locus">CLJ_B3605</name>
</gene>
<comment type="function">
    <text evidence="1">Catalyzes the attachment of tyrosine to tRNA(Tyr) in a two-step reaction: tyrosine is first activated by ATP to form Tyr-AMP and then transferred to the acceptor end of tRNA(Tyr).</text>
</comment>
<comment type="catalytic activity">
    <reaction evidence="1">
        <text>tRNA(Tyr) + L-tyrosine + ATP = L-tyrosyl-tRNA(Tyr) + AMP + diphosphate + H(+)</text>
        <dbReference type="Rhea" id="RHEA:10220"/>
        <dbReference type="Rhea" id="RHEA-COMP:9706"/>
        <dbReference type="Rhea" id="RHEA-COMP:9707"/>
        <dbReference type="ChEBI" id="CHEBI:15378"/>
        <dbReference type="ChEBI" id="CHEBI:30616"/>
        <dbReference type="ChEBI" id="CHEBI:33019"/>
        <dbReference type="ChEBI" id="CHEBI:58315"/>
        <dbReference type="ChEBI" id="CHEBI:78442"/>
        <dbReference type="ChEBI" id="CHEBI:78536"/>
        <dbReference type="ChEBI" id="CHEBI:456215"/>
        <dbReference type="EC" id="6.1.1.1"/>
    </reaction>
</comment>
<comment type="subunit">
    <text evidence="1">Homodimer.</text>
</comment>
<comment type="subcellular location">
    <subcellularLocation>
        <location evidence="1">Cytoplasm</location>
    </subcellularLocation>
</comment>
<comment type="similarity">
    <text evidence="1">Belongs to the class-I aminoacyl-tRNA synthetase family. TyrS type 1 subfamily.</text>
</comment>
<organism>
    <name type="scientific">Clostridium botulinum (strain 657 / Type Ba4)</name>
    <dbReference type="NCBI Taxonomy" id="515621"/>
    <lineage>
        <taxon>Bacteria</taxon>
        <taxon>Bacillati</taxon>
        <taxon>Bacillota</taxon>
        <taxon>Clostridia</taxon>
        <taxon>Eubacteriales</taxon>
        <taxon>Clostridiaceae</taxon>
        <taxon>Clostridium</taxon>
    </lineage>
</organism>
<keyword id="KW-0030">Aminoacyl-tRNA synthetase</keyword>
<keyword id="KW-0067">ATP-binding</keyword>
<keyword id="KW-0963">Cytoplasm</keyword>
<keyword id="KW-0436">Ligase</keyword>
<keyword id="KW-0547">Nucleotide-binding</keyword>
<keyword id="KW-0648">Protein biosynthesis</keyword>
<keyword id="KW-0694">RNA-binding</keyword>
<sequence>MINVYDILKERGYIKQLTHEEEIRELLGKEKISFYIGFDPTADSLHVGHFLQMMVMAHMQKAGHRPIALVGGGTGMIGDPTGKTDMRKMMTKEQIEYNCNCFKKQLAKIIDFSEDKAIMVNNADWLLNLNYIEFLREIGVHFSVNKMLTAECFKSRLEKGLSFLEFNYMLMQGYDFLELNRKYNCVMELGGDDQWSNILAGVDLIRRKESKSAYGMTFTLLTNSEGKKMGKTESGALWLDPEKTSPYEFYQYWRNVADADVEKCLRLITFLPMDEVRRLSSLEGAEINEAKRVLAFEVTKLIHGEEEAQKAKVAAEALFGGNAKDLGNMPTAYIDKDDLNNPLVDLLAKCEILPSKSEARRLIKQGGLYVNDEKVTDINLVLTEEHVTEDGIMIRRGKKNFNRIVVE</sequence>